<feature type="chain" id="PRO_1000099634" description="Lipoyl synthase">
    <location>
        <begin position="1"/>
        <end position="321"/>
    </location>
</feature>
<feature type="domain" description="Radical SAM core" evidence="2">
    <location>
        <begin position="80"/>
        <end position="297"/>
    </location>
</feature>
<feature type="binding site" evidence="1">
    <location>
        <position position="68"/>
    </location>
    <ligand>
        <name>[4Fe-4S] cluster</name>
        <dbReference type="ChEBI" id="CHEBI:49883"/>
        <label>1</label>
    </ligand>
</feature>
<feature type="binding site" evidence="1">
    <location>
        <position position="73"/>
    </location>
    <ligand>
        <name>[4Fe-4S] cluster</name>
        <dbReference type="ChEBI" id="CHEBI:49883"/>
        <label>1</label>
    </ligand>
</feature>
<feature type="binding site" evidence="1">
    <location>
        <position position="79"/>
    </location>
    <ligand>
        <name>[4Fe-4S] cluster</name>
        <dbReference type="ChEBI" id="CHEBI:49883"/>
        <label>1</label>
    </ligand>
</feature>
<feature type="binding site" evidence="1">
    <location>
        <position position="94"/>
    </location>
    <ligand>
        <name>[4Fe-4S] cluster</name>
        <dbReference type="ChEBI" id="CHEBI:49883"/>
        <label>2</label>
        <note>4Fe-4S-S-AdoMet</note>
    </ligand>
</feature>
<feature type="binding site" evidence="1">
    <location>
        <position position="98"/>
    </location>
    <ligand>
        <name>[4Fe-4S] cluster</name>
        <dbReference type="ChEBI" id="CHEBI:49883"/>
        <label>2</label>
        <note>4Fe-4S-S-AdoMet</note>
    </ligand>
</feature>
<feature type="binding site" evidence="1">
    <location>
        <position position="101"/>
    </location>
    <ligand>
        <name>[4Fe-4S] cluster</name>
        <dbReference type="ChEBI" id="CHEBI:49883"/>
        <label>2</label>
        <note>4Fe-4S-S-AdoMet</note>
    </ligand>
</feature>
<feature type="binding site" evidence="1">
    <location>
        <position position="308"/>
    </location>
    <ligand>
        <name>[4Fe-4S] cluster</name>
        <dbReference type="ChEBI" id="CHEBI:49883"/>
        <label>1</label>
    </ligand>
</feature>
<protein>
    <recommendedName>
        <fullName evidence="1">Lipoyl synthase</fullName>
        <ecNumber evidence="1">2.8.1.8</ecNumber>
    </recommendedName>
    <alternativeName>
        <fullName evidence="1">Lip-syn</fullName>
        <shortName evidence="1">LS</shortName>
    </alternativeName>
    <alternativeName>
        <fullName evidence="1">Lipoate synthase</fullName>
    </alternativeName>
    <alternativeName>
        <fullName evidence="1">Lipoic acid synthase</fullName>
    </alternativeName>
    <alternativeName>
        <fullName evidence="1">Sulfur insertion protein LipA</fullName>
    </alternativeName>
</protein>
<dbReference type="EC" id="2.8.1.8" evidence="1"/>
<dbReference type="EMBL" id="CP001127">
    <property type="protein sequence ID" value="ACF89834.1"/>
    <property type="molecule type" value="Genomic_DNA"/>
</dbReference>
<dbReference type="RefSeq" id="WP_000042640.1">
    <property type="nucleotide sequence ID" value="NC_011094.1"/>
</dbReference>
<dbReference type="SMR" id="B4TPA3"/>
<dbReference type="KEGG" id="sew:SeSA_A0792"/>
<dbReference type="HOGENOM" id="CLU_033144_2_1_6"/>
<dbReference type="UniPathway" id="UPA00538">
    <property type="reaction ID" value="UER00593"/>
</dbReference>
<dbReference type="Proteomes" id="UP000001865">
    <property type="component" value="Chromosome"/>
</dbReference>
<dbReference type="GO" id="GO:0005737">
    <property type="term" value="C:cytoplasm"/>
    <property type="evidence" value="ECO:0007669"/>
    <property type="project" value="UniProtKB-SubCell"/>
</dbReference>
<dbReference type="GO" id="GO:0051539">
    <property type="term" value="F:4 iron, 4 sulfur cluster binding"/>
    <property type="evidence" value="ECO:0007669"/>
    <property type="project" value="UniProtKB-UniRule"/>
</dbReference>
<dbReference type="GO" id="GO:0016992">
    <property type="term" value="F:lipoate synthase activity"/>
    <property type="evidence" value="ECO:0007669"/>
    <property type="project" value="UniProtKB-UniRule"/>
</dbReference>
<dbReference type="GO" id="GO:0046872">
    <property type="term" value="F:metal ion binding"/>
    <property type="evidence" value="ECO:0007669"/>
    <property type="project" value="UniProtKB-KW"/>
</dbReference>
<dbReference type="CDD" id="cd01335">
    <property type="entry name" value="Radical_SAM"/>
    <property type="match status" value="1"/>
</dbReference>
<dbReference type="FunFam" id="3.20.20.70:FF:000023">
    <property type="entry name" value="Lipoyl synthase"/>
    <property type="match status" value="1"/>
</dbReference>
<dbReference type="Gene3D" id="3.20.20.70">
    <property type="entry name" value="Aldolase class I"/>
    <property type="match status" value="1"/>
</dbReference>
<dbReference type="HAMAP" id="MF_00206">
    <property type="entry name" value="Lipoyl_synth"/>
    <property type="match status" value="1"/>
</dbReference>
<dbReference type="InterPro" id="IPR013785">
    <property type="entry name" value="Aldolase_TIM"/>
</dbReference>
<dbReference type="InterPro" id="IPR006638">
    <property type="entry name" value="Elp3/MiaA/NifB-like_rSAM"/>
</dbReference>
<dbReference type="InterPro" id="IPR031691">
    <property type="entry name" value="LIAS_N"/>
</dbReference>
<dbReference type="InterPro" id="IPR003698">
    <property type="entry name" value="Lipoyl_synth"/>
</dbReference>
<dbReference type="InterPro" id="IPR007197">
    <property type="entry name" value="rSAM"/>
</dbReference>
<dbReference type="NCBIfam" id="TIGR00510">
    <property type="entry name" value="lipA"/>
    <property type="match status" value="1"/>
</dbReference>
<dbReference type="NCBIfam" id="NF004019">
    <property type="entry name" value="PRK05481.1"/>
    <property type="match status" value="1"/>
</dbReference>
<dbReference type="NCBIfam" id="NF009544">
    <property type="entry name" value="PRK12928.1"/>
    <property type="match status" value="1"/>
</dbReference>
<dbReference type="PANTHER" id="PTHR10949">
    <property type="entry name" value="LIPOYL SYNTHASE"/>
    <property type="match status" value="1"/>
</dbReference>
<dbReference type="PANTHER" id="PTHR10949:SF0">
    <property type="entry name" value="LIPOYL SYNTHASE, MITOCHONDRIAL"/>
    <property type="match status" value="1"/>
</dbReference>
<dbReference type="Pfam" id="PF16881">
    <property type="entry name" value="LIAS_N"/>
    <property type="match status" value="1"/>
</dbReference>
<dbReference type="Pfam" id="PF04055">
    <property type="entry name" value="Radical_SAM"/>
    <property type="match status" value="1"/>
</dbReference>
<dbReference type="PIRSF" id="PIRSF005963">
    <property type="entry name" value="Lipoyl_synth"/>
    <property type="match status" value="1"/>
</dbReference>
<dbReference type="SFLD" id="SFLDF00271">
    <property type="entry name" value="lipoyl_synthase"/>
    <property type="match status" value="1"/>
</dbReference>
<dbReference type="SFLD" id="SFLDS00029">
    <property type="entry name" value="Radical_SAM"/>
    <property type="match status" value="1"/>
</dbReference>
<dbReference type="SMART" id="SM00729">
    <property type="entry name" value="Elp3"/>
    <property type="match status" value="1"/>
</dbReference>
<dbReference type="SUPFAM" id="SSF102114">
    <property type="entry name" value="Radical SAM enzymes"/>
    <property type="match status" value="1"/>
</dbReference>
<dbReference type="PROSITE" id="PS51918">
    <property type="entry name" value="RADICAL_SAM"/>
    <property type="match status" value="1"/>
</dbReference>
<keyword id="KW-0004">4Fe-4S</keyword>
<keyword id="KW-0963">Cytoplasm</keyword>
<keyword id="KW-0408">Iron</keyword>
<keyword id="KW-0411">Iron-sulfur</keyword>
<keyword id="KW-0479">Metal-binding</keyword>
<keyword id="KW-0949">S-adenosyl-L-methionine</keyword>
<keyword id="KW-0808">Transferase</keyword>
<sequence length="321" mass="36042">MSKPIVMERGVKYRDADKMALIPVKNVVTERDALLRKPEWMKIKLPADSTRIQGIKAAMRKNGLHSVCEEASCPNLAECFNHGTATFMILGAICTRRCPFCDVAHGRPVAPDAEEPQKLAQTIADMALRYVVITSVDRDDLRDGGAQHFADCITAIRAKSPEIKIETLVPDFRGRMDRALDILNATPPDVFNHNLENVPRIYRQVRPGADYNWSLKLLERFKEAHPEIPTKSGLMVGLGETNAEIIEVMRDLRRHGVTMLTLGQYLQPSRHHLPVQRYVSPEEFDEMKAEALAMGFTHAACGPFVRSSYHADLQAKGMEVK</sequence>
<comment type="function">
    <text evidence="1">Catalyzes the radical-mediated insertion of two sulfur atoms into the C-6 and C-8 positions of the octanoyl moiety bound to the lipoyl domains of lipoate-dependent enzymes, thereby converting the octanoylated domains into lipoylated derivatives.</text>
</comment>
<comment type="catalytic activity">
    <reaction evidence="1">
        <text>[[Fe-S] cluster scaffold protein carrying a second [4Fe-4S](2+) cluster] + N(6)-octanoyl-L-lysyl-[protein] + 2 oxidized [2Fe-2S]-[ferredoxin] + 2 S-adenosyl-L-methionine + 4 H(+) = [[Fe-S] cluster scaffold protein] + N(6)-[(R)-dihydrolipoyl]-L-lysyl-[protein] + 4 Fe(3+) + 2 hydrogen sulfide + 2 5'-deoxyadenosine + 2 L-methionine + 2 reduced [2Fe-2S]-[ferredoxin]</text>
        <dbReference type="Rhea" id="RHEA:16585"/>
        <dbReference type="Rhea" id="RHEA-COMP:9928"/>
        <dbReference type="Rhea" id="RHEA-COMP:10000"/>
        <dbReference type="Rhea" id="RHEA-COMP:10001"/>
        <dbReference type="Rhea" id="RHEA-COMP:10475"/>
        <dbReference type="Rhea" id="RHEA-COMP:14568"/>
        <dbReference type="Rhea" id="RHEA-COMP:14569"/>
        <dbReference type="ChEBI" id="CHEBI:15378"/>
        <dbReference type="ChEBI" id="CHEBI:17319"/>
        <dbReference type="ChEBI" id="CHEBI:29034"/>
        <dbReference type="ChEBI" id="CHEBI:29919"/>
        <dbReference type="ChEBI" id="CHEBI:33722"/>
        <dbReference type="ChEBI" id="CHEBI:33737"/>
        <dbReference type="ChEBI" id="CHEBI:33738"/>
        <dbReference type="ChEBI" id="CHEBI:57844"/>
        <dbReference type="ChEBI" id="CHEBI:59789"/>
        <dbReference type="ChEBI" id="CHEBI:78809"/>
        <dbReference type="ChEBI" id="CHEBI:83100"/>
        <dbReference type="EC" id="2.8.1.8"/>
    </reaction>
</comment>
<comment type="cofactor">
    <cofactor evidence="1">
        <name>[4Fe-4S] cluster</name>
        <dbReference type="ChEBI" id="CHEBI:49883"/>
    </cofactor>
    <text evidence="1">Binds 2 [4Fe-4S] clusters per subunit. One cluster is coordinated with 3 cysteines and an exchangeable S-adenosyl-L-methionine.</text>
</comment>
<comment type="pathway">
    <text evidence="1">Protein modification; protein lipoylation via endogenous pathway; protein N(6)-(lipoyl)lysine from octanoyl-[acyl-carrier-protein]: step 2/2.</text>
</comment>
<comment type="subcellular location">
    <subcellularLocation>
        <location evidence="1">Cytoplasm</location>
    </subcellularLocation>
</comment>
<comment type="similarity">
    <text evidence="1">Belongs to the radical SAM superfamily. Lipoyl synthase family.</text>
</comment>
<reference key="1">
    <citation type="journal article" date="2011" name="J. Bacteriol.">
        <title>Comparative genomics of 28 Salmonella enterica isolates: evidence for CRISPR-mediated adaptive sublineage evolution.</title>
        <authorList>
            <person name="Fricke W.F."/>
            <person name="Mammel M.K."/>
            <person name="McDermott P.F."/>
            <person name="Tartera C."/>
            <person name="White D.G."/>
            <person name="Leclerc J.E."/>
            <person name="Ravel J."/>
            <person name="Cebula T.A."/>
        </authorList>
    </citation>
    <scope>NUCLEOTIDE SEQUENCE [LARGE SCALE GENOMIC DNA]</scope>
    <source>
        <strain>CVM19633</strain>
    </source>
</reference>
<organism>
    <name type="scientific">Salmonella schwarzengrund (strain CVM19633)</name>
    <dbReference type="NCBI Taxonomy" id="439843"/>
    <lineage>
        <taxon>Bacteria</taxon>
        <taxon>Pseudomonadati</taxon>
        <taxon>Pseudomonadota</taxon>
        <taxon>Gammaproteobacteria</taxon>
        <taxon>Enterobacterales</taxon>
        <taxon>Enterobacteriaceae</taxon>
        <taxon>Salmonella</taxon>
    </lineage>
</organism>
<proteinExistence type="inferred from homology"/>
<evidence type="ECO:0000255" key="1">
    <source>
        <dbReference type="HAMAP-Rule" id="MF_00206"/>
    </source>
</evidence>
<evidence type="ECO:0000255" key="2">
    <source>
        <dbReference type="PROSITE-ProRule" id="PRU01266"/>
    </source>
</evidence>
<accession>B4TPA3</accession>
<name>LIPA_SALSV</name>
<gene>
    <name evidence="1" type="primary">lipA</name>
    <name type="ordered locus">SeSA_A0792</name>
</gene>